<feature type="chain" id="PRO_0000192238" description="Ribosomal protein L11 methyltransferase">
    <location>
        <begin position="1"/>
        <end position="315"/>
    </location>
</feature>
<feature type="binding site" evidence="1">
    <location>
        <position position="161"/>
    </location>
    <ligand>
        <name>S-adenosyl-L-methionine</name>
        <dbReference type="ChEBI" id="CHEBI:59789"/>
    </ligand>
</feature>
<feature type="binding site" evidence="1">
    <location>
        <position position="182"/>
    </location>
    <ligand>
        <name>S-adenosyl-L-methionine</name>
        <dbReference type="ChEBI" id="CHEBI:59789"/>
    </ligand>
</feature>
<feature type="binding site" evidence="1">
    <location>
        <position position="204"/>
    </location>
    <ligand>
        <name>S-adenosyl-L-methionine</name>
        <dbReference type="ChEBI" id="CHEBI:59789"/>
    </ligand>
</feature>
<feature type="binding site" evidence="1">
    <location>
        <position position="248"/>
    </location>
    <ligand>
        <name>S-adenosyl-L-methionine</name>
        <dbReference type="ChEBI" id="CHEBI:59789"/>
    </ligand>
</feature>
<evidence type="ECO:0000255" key="1">
    <source>
        <dbReference type="HAMAP-Rule" id="MF_00735"/>
    </source>
</evidence>
<proteinExistence type="inferred from homology"/>
<sequence>MKWAEFRVHTTQEAVEPVSNILHELGAAGVAIEDPQDLVTEWSVKYGEVYELSPEDYPDEGVMVKAYFPMGATFKETIAEVRRRVHNLVSFQIDIGHGTMDYTEVKEEDWATAWKSFYHPVQVTEQVTIVPTWEEYSARPGEIVIELDPGMAFGTGTHPTTILSLQALEQAVKQGDAVIDVGTGSGILAIAAWKFGAESITALDLDEVAVNSAKANVALNSASDFVHVQQGNLLDDVASESADVLVSNILAEVILQFTADAYRVVKRGGLFLTSGIISSKREAVEGALKAVGFLIQEVNELDDWVAIVAQKPSQA</sequence>
<name>PRMA_SHOC1</name>
<accession>Q5WHF9</accession>
<organism>
    <name type="scientific">Shouchella clausii (strain KSM-K16)</name>
    <name type="common">Alkalihalobacillus clausii</name>
    <dbReference type="NCBI Taxonomy" id="66692"/>
    <lineage>
        <taxon>Bacteria</taxon>
        <taxon>Bacillati</taxon>
        <taxon>Bacillota</taxon>
        <taxon>Bacilli</taxon>
        <taxon>Bacillales</taxon>
        <taxon>Bacillaceae</taxon>
        <taxon>Shouchella</taxon>
    </lineage>
</organism>
<protein>
    <recommendedName>
        <fullName evidence="1">Ribosomal protein L11 methyltransferase</fullName>
        <shortName evidence="1">L11 Mtase</shortName>
        <ecNumber evidence="1">2.1.1.-</ecNumber>
    </recommendedName>
</protein>
<keyword id="KW-0963">Cytoplasm</keyword>
<keyword id="KW-0489">Methyltransferase</keyword>
<keyword id="KW-1185">Reference proteome</keyword>
<keyword id="KW-0949">S-adenosyl-L-methionine</keyword>
<keyword id="KW-0808">Transferase</keyword>
<reference key="1">
    <citation type="submission" date="2003-10" db="EMBL/GenBank/DDBJ databases">
        <title>The complete genome sequence of the alkaliphilic Bacillus clausii KSM-K16.</title>
        <authorList>
            <person name="Takaki Y."/>
            <person name="Kageyama Y."/>
            <person name="Shimamura S."/>
            <person name="Suzuki H."/>
            <person name="Nishi S."/>
            <person name="Hatada Y."/>
            <person name="Kawai S."/>
            <person name="Ito S."/>
            <person name="Horikoshi K."/>
        </authorList>
    </citation>
    <scope>NUCLEOTIDE SEQUENCE [LARGE SCALE GENOMIC DNA]</scope>
    <source>
        <strain>KSM-K16</strain>
    </source>
</reference>
<gene>
    <name evidence="1" type="primary">prmA</name>
    <name type="ordered locus">ABC1661</name>
</gene>
<comment type="function">
    <text evidence="1">Methylates ribosomal protein L11.</text>
</comment>
<comment type="catalytic activity">
    <reaction evidence="1">
        <text>L-lysyl-[protein] + 3 S-adenosyl-L-methionine = N(6),N(6),N(6)-trimethyl-L-lysyl-[protein] + 3 S-adenosyl-L-homocysteine + 3 H(+)</text>
        <dbReference type="Rhea" id="RHEA:54192"/>
        <dbReference type="Rhea" id="RHEA-COMP:9752"/>
        <dbReference type="Rhea" id="RHEA-COMP:13826"/>
        <dbReference type="ChEBI" id="CHEBI:15378"/>
        <dbReference type="ChEBI" id="CHEBI:29969"/>
        <dbReference type="ChEBI" id="CHEBI:57856"/>
        <dbReference type="ChEBI" id="CHEBI:59789"/>
        <dbReference type="ChEBI" id="CHEBI:61961"/>
    </reaction>
</comment>
<comment type="subcellular location">
    <subcellularLocation>
        <location evidence="1">Cytoplasm</location>
    </subcellularLocation>
</comment>
<comment type="similarity">
    <text evidence="1">Belongs to the methyltransferase superfamily. PrmA family.</text>
</comment>
<dbReference type="EC" id="2.1.1.-" evidence="1"/>
<dbReference type="EMBL" id="AP006627">
    <property type="protein sequence ID" value="BAD64196.1"/>
    <property type="molecule type" value="Genomic_DNA"/>
</dbReference>
<dbReference type="RefSeq" id="WP_011246505.1">
    <property type="nucleotide sequence ID" value="NC_006582.1"/>
</dbReference>
<dbReference type="SMR" id="Q5WHF9"/>
<dbReference type="STRING" id="66692.ABC1661"/>
<dbReference type="KEGG" id="bcl:ABC1661"/>
<dbReference type="eggNOG" id="COG2264">
    <property type="taxonomic scope" value="Bacteria"/>
</dbReference>
<dbReference type="HOGENOM" id="CLU_049382_0_1_9"/>
<dbReference type="OrthoDB" id="9785995at2"/>
<dbReference type="Proteomes" id="UP000001168">
    <property type="component" value="Chromosome"/>
</dbReference>
<dbReference type="GO" id="GO:0005737">
    <property type="term" value="C:cytoplasm"/>
    <property type="evidence" value="ECO:0007669"/>
    <property type="project" value="UniProtKB-SubCell"/>
</dbReference>
<dbReference type="GO" id="GO:0016279">
    <property type="term" value="F:protein-lysine N-methyltransferase activity"/>
    <property type="evidence" value="ECO:0007669"/>
    <property type="project" value="RHEA"/>
</dbReference>
<dbReference type="GO" id="GO:0032259">
    <property type="term" value="P:methylation"/>
    <property type="evidence" value="ECO:0007669"/>
    <property type="project" value="UniProtKB-KW"/>
</dbReference>
<dbReference type="CDD" id="cd02440">
    <property type="entry name" value="AdoMet_MTases"/>
    <property type="match status" value="1"/>
</dbReference>
<dbReference type="Gene3D" id="3.40.50.150">
    <property type="entry name" value="Vaccinia Virus protein VP39"/>
    <property type="match status" value="1"/>
</dbReference>
<dbReference type="HAMAP" id="MF_00735">
    <property type="entry name" value="Methyltr_PrmA"/>
    <property type="match status" value="1"/>
</dbReference>
<dbReference type="InterPro" id="IPR050078">
    <property type="entry name" value="Ribosomal_L11_MeTrfase_PrmA"/>
</dbReference>
<dbReference type="InterPro" id="IPR004498">
    <property type="entry name" value="Ribosomal_PrmA_MeTrfase"/>
</dbReference>
<dbReference type="InterPro" id="IPR029063">
    <property type="entry name" value="SAM-dependent_MTases_sf"/>
</dbReference>
<dbReference type="NCBIfam" id="TIGR00406">
    <property type="entry name" value="prmA"/>
    <property type="match status" value="1"/>
</dbReference>
<dbReference type="PANTHER" id="PTHR43648">
    <property type="entry name" value="ELECTRON TRANSFER FLAVOPROTEIN BETA SUBUNIT LYSINE METHYLTRANSFERASE"/>
    <property type="match status" value="1"/>
</dbReference>
<dbReference type="PANTHER" id="PTHR43648:SF1">
    <property type="entry name" value="ELECTRON TRANSFER FLAVOPROTEIN BETA SUBUNIT LYSINE METHYLTRANSFERASE"/>
    <property type="match status" value="1"/>
</dbReference>
<dbReference type="Pfam" id="PF06325">
    <property type="entry name" value="PrmA"/>
    <property type="match status" value="1"/>
</dbReference>
<dbReference type="PIRSF" id="PIRSF000401">
    <property type="entry name" value="RPL11_MTase"/>
    <property type="match status" value="1"/>
</dbReference>
<dbReference type="SUPFAM" id="SSF53335">
    <property type="entry name" value="S-adenosyl-L-methionine-dependent methyltransferases"/>
    <property type="match status" value="1"/>
</dbReference>